<accession>Q8VZM7</accession>
<accession>Q94AC5</accession>
<accession>Q9LYZ1</accession>
<reference key="1">
    <citation type="journal article" date="2000" name="Nature">
        <title>Sequence and analysis of chromosome 5 of the plant Arabidopsis thaliana.</title>
        <authorList>
            <person name="Tabata S."/>
            <person name="Kaneko T."/>
            <person name="Nakamura Y."/>
            <person name="Kotani H."/>
            <person name="Kato T."/>
            <person name="Asamizu E."/>
            <person name="Miyajima N."/>
            <person name="Sasamoto S."/>
            <person name="Kimura T."/>
            <person name="Hosouchi T."/>
            <person name="Kawashima K."/>
            <person name="Kohara M."/>
            <person name="Matsumoto M."/>
            <person name="Matsuno A."/>
            <person name="Muraki A."/>
            <person name="Nakayama S."/>
            <person name="Nakazaki N."/>
            <person name="Naruo K."/>
            <person name="Okumura S."/>
            <person name="Shinpo S."/>
            <person name="Takeuchi C."/>
            <person name="Wada T."/>
            <person name="Watanabe A."/>
            <person name="Yamada M."/>
            <person name="Yasuda M."/>
            <person name="Sato S."/>
            <person name="de la Bastide M."/>
            <person name="Huang E."/>
            <person name="Spiegel L."/>
            <person name="Gnoj L."/>
            <person name="O'Shaughnessy A."/>
            <person name="Preston R."/>
            <person name="Habermann K."/>
            <person name="Murray J."/>
            <person name="Johnson D."/>
            <person name="Rohlfing T."/>
            <person name="Nelson J."/>
            <person name="Stoneking T."/>
            <person name="Pepin K."/>
            <person name="Spieth J."/>
            <person name="Sekhon M."/>
            <person name="Armstrong J."/>
            <person name="Becker M."/>
            <person name="Belter E."/>
            <person name="Cordum H."/>
            <person name="Cordes M."/>
            <person name="Courtney L."/>
            <person name="Courtney W."/>
            <person name="Dante M."/>
            <person name="Du H."/>
            <person name="Edwards J."/>
            <person name="Fryman J."/>
            <person name="Haakensen B."/>
            <person name="Lamar E."/>
            <person name="Latreille P."/>
            <person name="Leonard S."/>
            <person name="Meyer R."/>
            <person name="Mulvaney E."/>
            <person name="Ozersky P."/>
            <person name="Riley A."/>
            <person name="Strowmatt C."/>
            <person name="Wagner-McPherson C."/>
            <person name="Wollam A."/>
            <person name="Yoakum M."/>
            <person name="Bell M."/>
            <person name="Dedhia N."/>
            <person name="Parnell L."/>
            <person name="Shah R."/>
            <person name="Rodriguez M."/>
            <person name="Hoon See L."/>
            <person name="Vil D."/>
            <person name="Baker J."/>
            <person name="Kirchoff K."/>
            <person name="Toth K."/>
            <person name="King L."/>
            <person name="Bahret A."/>
            <person name="Miller B."/>
            <person name="Marra M.A."/>
            <person name="Martienssen R."/>
            <person name="McCombie W.R."/>
            <person name="Wilson R.K."/>
            <person name="Murphy G."/>
            <person name="Bancroft I."/>
            <person name="Volckaert G."/>
            <person name="Wambutt R."/>
            <person name="Duesterhoeft A."/>
            <person name="Stiekema W."/>
            <person name="Pohl T."/>
            <person name="Entian K.-D."/>
            <person name="Terryn N."/>
            <person name="Hartley N."/>
            <person name="Bent E."/>
            <person name="Johnson S."/>
            <person name="Langham S.-A."/>
            <person name="McCullagh B."/>
            <person name="Robben J."/>
            <person name="Grymonprez B."/>
            <person name="Zimmermann W."/>
            <person name="Ramsperger U."/>
            <person name="Wedler H."/>
            <person name="Balke K."/>
            <person name="Wedler E."/>
            <person name="Peters S."/>
            <person name="van Staveren M."/>
            <person name="Dirkse W."/>
            <person name="Mooijman P."/>
            <person name="Klein Lankhorst R."/>
            <person name="Weitzenegger T."/>
            <person name="Bothe G."/>
            <person name="Rose M."/>
            <person name="Hauf J."/>
            <person name="Berneiser S."/>
            <person name="Hempel S."/>
            <person name="Feldpausch M."/>
            <person name="Lamberth S."/>
            <person name="Villarroel R."/>
            <person name="Gielen J."/>
            <person name="Ardiles W."/>
            <person name="Bents O."/>
            <person name="Lemcke K."/>
            <person name="Kolesov G."/>
            <person name="Mayer K.F.X."/>
            <person name="Rudd S."/>
            <person name="Schoof H."/>
            <person name="Schueller C."/>
            <person name="Zaccaria P."/>
            <person name="Mewes H.-W."/>
            <person name="Bevan M."/>
            <person name="Fransz P.F."/>
        </authorList>
    </citation>
    <scope>NUCLEOTIDE SEQUENCE [LARGE SCALE GENOMIC DNA]</scope>
    <source>
        <strain>cv. Columbia</strain>
    </source>
</reference>
<reference key="2">
    <citation type="journal article" date="2017" name="Plant J.">
        <title>Araport11: a complete reannotation of the Arabidopsis thaliana reference genome.</title>
        <authorList>
            <person name="Cheng C.Y."/>
            <person name="Krishnakumar V."/>
            <person name="Chan A.P."/>
            <person name="Thibaud-Nissen F."/>
            <person name="Schobel S."/>
            <person name="Town C.D."/>
        </authorList>
    </citation>
    <scope>GENOME REANNOTATION</scope>
    <source>
        <strain>cv. Columbia</strain>
    </source>
</reference>
<reference key="3">
    <citation type="journal article" date="2003" name="Science">
        <title>Empirical analysis of transcriptional activity in the Arabidopsis genome.</title>
        <authorList>
            <person name="Yamada K."/>
            <person name="Lim J."/>
            <person name="Dale J.M."/>
            <person name="Chen H."/>
            <person name="Shinn P."/>
            <person name="Palm C.J."/>
            <person name="Southwick A.M."/>
            <person name="Wu H.C."/>
            <person name="Kim C.J."/>
            <person name="Nguyen M."/>
            <person name="Pham P.K."/>
            <person name="Cheuk R.F."/>
            <person name="Karlin-Newmann G."/>
            <person name="Liu S.X."/>
            <person name="Lam B."/>
            <person name="Sakano H."/>
            <person name="Wu T."/>
            <person name="Yu G."/>
            <person name="Miranda M."/>
            <person name="Quach H.L."/>
            <person name="Tripp M."/>
            <person name="Chang C.H."/>
            <person name="Lee J.M."/>
            <person name="Toriumi M.J."/>
            <person name="Chan M.M."/>
            <person name="Tang C.C."/>
            <person name="Onodera C.S."/>
            <person name="Deng J.M."/>
            <person name="Akiyama K."/>
            <person name="Ansari Y."/>
            <person name="Arakawa T."/>
            <person name="Banh J."/>
            <person name="Banno F."/>
            <person name="Bowser L."/>
            <person name="Brooks S.Y."/>
            <person name="Carninci P."/>
            <person name="Chao Q."/>
            <person name="Choy N."/>
            <person name="Enju A."/>
            <person name="Goldsmith A.D."/>
            <person name="Gurjal M."/>
            <person name="Hansen N.F."/>
            <person name="Hayashizaki Y."/>
            <person name="Johnson-Hopson C."/>
            <person name="Hsuan V.W."/>
            <person name="Iida K."/>
            <person name="Karnes M."/>
            <person name="Khan S."/>
            <person name="Koesema E."/>
            <person name="Ishida J."/>
            <person name="Jiang P.X."/>
            <person name="Jones T."/>
            <person name="Kawai J."/>
            <person name="Kamiya A."/>
            <person name="Meyers C."/>
            <person name="Nakajima M."/>
            <person name="Narusaka M."/>
            <person name="Seki M."/>
            <person name="Sakurai T."/>
            <person name="Satou M."/>
            <person name="Tamse R."/>
            <person name="Vaysberg M."/>
            <person name="Wallender E.K."/>
            <person name="Wong C."/>
            <person name="Yamamura Y."/>
            <person name="Yuan S."/>
            <person name="Shinozaki K."/>
            <person name="Davis R.W."/>
            <person name="Theologis A."/>
            <person name="Ecker J.R."/>
        </authorList>
    </citation>
    <scope>NUCLEOTIDE SEQUENCE [LARGE SCALE MRNA]</scope>
    <source>
        <strain>cv. Columbia</strain>
    </source>
</reference>
<organism>
    <name type="scientific">Arabidopsis thaliana</name>
    <name type="common">Mouse-ear cress</name>
    <dbReference type="NCBI Taxonomy" id="3702"/>
    <lineage>
        <taxon>Eukaryota</taxon>
        <taxon>Viridiplantae</taxon>
        <taxon>Streptophyta</taxon>
        <taxon>Embryophyta</taxon>
        <taxon>Tracheophyta</taxon>
        <taxon>Spermatophyta</taxon>
        <taxon>Magnoliopsida</taxon>
        <taxon>eudicotyledons</taxon>
        <taxon>Gunneridae</taxon>
        <taxon>Pentapetalae</taxon>
        <taxon>rosids</taxon>
        <taxon>malvids</taxon>
        <taxon>Brassicales</taxon>
        <taxon>Brassicaceae</taxon>
        <taxon>Camelineae</taxon>
        <taxon>Arabidopsis</taxon>
    </lineage>
</organism>
<protein>
    <recommendedName>
        <fullName>Putative ion channel POLLUX-like 1</fullName>
    </recommendedName>
</protein>
<dbReference type="EMBL" id="AL162973">
    <property type="protein sequence ID" value="CAB86048.1"/>
    <property type="status" value="ALT_SEQ"/>
    <property type="molecule type" value="Genomic_DNA"/>
</dbReference>
<dbReference type="EMBL" id="CP002688">
    <property type="protein sequence ID" value="AED90538.1"/>
    <property type="molecule type" value="Genomic_DNA"/>
</dbReference>
<dbReference type="EMBL" id="AY048284">
    <property type="protein sequence ID" value="AAK82546.1"/>
    <property type="molecule type" value="mRNA"/>
</dbReference>
<dbReference type="EMBL" id="AY064004">
    <property type="protein sequence ID" value="AAL36360.1"/>
    <property type="molecule type" value="mRNA"/>
</dbReference>
<dbReference type="PIR" id="T48315">
    <property type="entry name" value="T48315"/>
</dbReference>
<dbReference type="RefSeq" id="NP_195914.2">
    <property type="nucleotide sequence ID" value="NM_120372.5"/>
</dbReference>
<dbReference type="SMR" id="Q8VZM7"/>
<dbReference type="FunCoup" id="Q8VZM7">
    <property type="interactions" value="93"/>
</dbReference>
<dbReference type="STRING" id="3702.Q8VZM7"/>
<dbReference type="iPTMnet" id="Q8VZM7"/>
<dbReference type="PaxDb" id="3702-AT5G02940.1"/>
<dbReference type="ProteomicsDB" id="236580"/>
<dbReference type="EnsemblPlants" id="AT5G02940.1">
    <property type="protein sequence ID" value="AT5G02940.1"/>
    <property type="gene ID" value="AT5G02940"/>
</dbReference>
<dbReference type="GeneID" id="831426"/>
<dbReference type="Gramene" id="AT5G02940.1">
    <property type="protein sequence ID" value="AT5G02940.1"/>
    <property type="gene ID" value="AT5G02940"/>
</dbReference>
<dbReference type="KEGG" id="ath:AT5G02940"/>
<dbReference type="Araport" id="AT5G02940"/>
<dbReference type="TAIR" id="AT5G02940"/>
<dbReference type="eggNOG" id="ENOG502QW0U">
    <property type="taxonomic scope" value="Eukaryota"/>
</dbReference>
<dbReference type="HOGENOM" id="CLU_011206_0_0_1"/>
<dbReference type="InParanoid" id="Q8VZM7"/>
<dbReference type="OMA" id="RCANHIP"/>
<dbReference type="PhylomeDB" id="Q8VZM7"/>
<dbReference type="PRO" id="PR:Q8VZM7"/>
<dbReference type="Proteomes" id="UP000006548">
    <property type="component" value="Chromosome 5"/>
</dbReference>
<dbReference type="ExpressionAtlas" id="Q8VZM7">
    <property type="expression patterns" value="baseline and differential"/>
</dbReference>
<dbReference type="GO" id="GO:0009507">
    <property type="term" value="C:chloroplast"/>
    <property type="evidence" value="ECO:0007005"/>
    <property type="project" value="TAIR"/>
</dbReference>
<dbReference type="GO" id="GO:0009941">
    <property type="term" value="C:chloroplast envelope"/>
    <property type="evidence" value="ECO:0007005"/>
    <property type="project" value="TAIR"/>
</dbReference>
<dbReference type="GO" id="GO:0042170">
    <property type="term" value="C:plastid membrane"/>
    <property type="evidence" value="ECO:0000314"/>
    <property type="project" value="TAIR"/>
</dbReference>
<dbReference type="GO" id="GO:0006813">
    <property type="term" value="P:potassium ion transport"/>
    <property type="evidence" value="ECO:0007669"/>
    <property type="project" value="InterPro"/>
</dbReference>
<dbReference type="Gene3D" id="3.40.50.720">
    <property type="entry name" value="NAD(P)-binding Rossmann-like Domain"/>
    <property type="match status" value="1"/>
</dbReference>
<dbReference type="InterPro" id="IPR044849">
    <property type="entry name" value="CASTOR/POLLUX/SYM8-like"/>
</dbReference>
<dbReference type="InterPro" id="IPR010420">
    <property type="entry name" value="CASTOR/POLLUX/SYM8_dom"/>
</dbReference>
<dbReference type="InterPro" id="IPR036721">
    <property type="entry name" value="RCK_C_sf"/>
</dbReference>
<dbReference type="InterPro" id="IPR003148">
    <property type="entry name" value="RCK_N"/>
</dbReference>
<dbReference type="PANTHER" id="PTHR31563:SF13">
    <property type="entry name" value="ION CHANNEL POLLUX-LIKE 1-RELATED"/>
    <property type="match status" value="1"/>
</dbReference>
<dbReference type="PANTHER" id="PTHR31563">
    <property type="entry name" value="ION CHANNEL POLLUX-RELATED"/>
    <property type="match status" value="1"/>
</dbReference>
<dbReference type="Pfam" id="PF06241">
    <property type="entry name" value="Castor_Poll_mid"/>
    <property type="match status" value="1"/>
</dbReference>
<dbReference type="SUPFAM" id="SSF116726">
    <property type="entry name" value="TrkA C-terminal domain-like"/>
    <property type="match status" value="1"/>
</dbReference>
<dbReference type="SUPFAM" id="SSF81324">
    <property type="entry name" value="Voltage-gated potassium channels"/>
    <property type="match status" value="1"/>
</dbReference>
<dbReference type="PROSITE" id="PS51201">
    <property type="entry name" value="RCK_N"/>
    <property type="match status" value="2"/>
</dbReference>
<gene>
    <name type="ordered locus">At5g02940</name>
    <name type="ORF">F9G14.250</name>
</gene>
<evidence type="ECO:0000250" key="1"/>
<evidence type="ECO:0000255" key="2"/>
<evidence type="ECO:0000255" key="3">
    <source>
        <dbReference type="PROSITE-ProRule" id="PRU00543"/>
    </source>
</evidence>
<evidence type="ECO:0000305" key="4"/>
<feature type="chain" id="PRO_0000415274" description="Putative ion channel POLLUX-like 1">
    <location>
        <begin position="1"/>
        <end position="813"/>
    </location>
</feature>
<feature type="transmembrane region" description="Helical" evidence="2">
    <location>
        <begin position="161"/>
        <end position="181"/>
    </location>
</feature>
<feature type="transmembrane region" description="Helical" evidence="2">
    <location>
        <begin position="216"/>
        <end position="236"/>
    </location>
</feature>
<feature type="domain" description="RCK N-terminal 1" evidence="3">
    <location>
        <begin position="258"/>
        <end position="407"/>
    </location>
</feature>
<feature type="domain" description="RCK N-terminal 2" evidence="3">
    <location>
        <begin position="550"/>
        <end position="712"/>
    </location>
</feature>
<feature type="sequence conflict" description="In Ref. 3; AAK82546." evidence="4" ref="3">
    <original>L</original>
    <variation>W</variation>
    <location>
        <position position="31"/>
    </location>
</feature>
<comment type="subcellular location">
    <subcellularLocation>
        <location evidence="1">Membrane</location>
        <topology evidence="1">Multi-pass membrane protein</topology>
    </subcellularLocation>
</comment>
<comment type="similarity">
    <text evidence="4">Belongs to the castor/pollux (TC 1.A.1.23) family.</text>
</comment>
<comment type="sequence caution" evidence="4">
    <conflict type="erroneous gene model prediction">
        <sequence resource="EMBL-CDS" id="CAB86048"/>
    </conflict>
</comment>
<proteinExistence type="evidence at transcript level"/>
<sequence>MVAVQLFTWKPLILPSQALTRDRLASFHRSLSLHSLPLGGIKSSSFRGTFKVKSQRTGDTEPPNKNFKDLNSKFYKSLPYKLVIGCIPLYAVLRIAQKIFQELPNLIQNSVKAGLPFACASNAIDKHPLLKAIPSSHDIKWGLARSSYLFNTQLEKNLGTVFVVLLITCFSFVIIGGLFFFKFRKDTSLEDCLWEAWACLVNADTHLEQKTRFERLIGFVLAIWGIVFYSRLLSTMTEQFRYHMKKVREGAHMQVLESDHIIICGINSHLPFILKQLNSYQQHAVRLGTTTARKQTLLLMSDTPRKEMDKLAEAYAKDFDQLDILTKSCSLNMTKSFERAAACMARAIIILPTKGDRYEVDTDAFLSVLALEPIQKMESIPTIVEVSSSNMYDLLKSISGLKVEPVENSTSKLFVQCSRQKDLIKIYRHLLNYSKNVFNLCSFPNLTGMKYRQLRLGFQEVVVCGILRDGKVNFHPNDDEELMETDKLLFIAPLKKDFLYTDMKTENMTVDETDDTRKQVYEEKKSRLEKIITRPSKSLSKGSDSFKGPKESILLLGWRGDVVNMIKEFDSYLGPGSSLEILSDVPLEDRRGVDQSIATGKIKNIQVSHSVGNHMDYDTLKESIMHMQNKYEKGEEDIRLTIVVISDRDLLLGDPSRADKQSAYTLLLAETICNKLGVKVHNLASEIVDTKLGKQITRLKPSLTFIAAEEVMSLVTAQVAENSELNEVWKDILDAEGDEIYVKDIELYMKEGENPSFTELSERAWLRREVAIGYIKGGKKIINPVPKTEPVSLEMEDSLIVISELEGDQVITL</sequence>
<name>POLL1_ARATH</name>
<keyword id="KW-0472">Membrane</keyword>
<keyword id="KW-1185">Reference proteome</keyword>
<keyword id="KW-0812">Transmembrane</keyword>
<keyword id="KW-1133">Transmembrane helix</keyword>